<feature type="chain" id="PRO_0000427458" description="Uncharacterized protein MT2135">
    <location>
        <begin position="1"/>
        <end position="487"/>
    </location>
</feature>
<feature type="transmembrane region" description="Helical" evidence="1">
    <location>
        <begin position="10"/>
        <end position="30"/>
    </location>
</feature>
<feature type="transmembrane region" description="Helical" evidence="1">
    <location>
        <begin position="45"/>
        <end position="65"/>
    </location>
</feature>
<feature type="transmembrane region" description="Helical" evidence="1">
    <location>
        <begin position="439"/>
        <end position="459"/>
    </location>
</feature>
<organism>
    <name type="scientific">Mycobacterium tuberculosis (strain CDC 1551 / Oshkosh)</name>
    <dbReference type="NCBI Taxonomy" id="83331"/>
    <lineage>
        <taxon>Bacteria</taxon>
        <taxon>Bacillati</taxon>
        <taxon>Actinomycetota</taxon>
        <taxon>Actinomycetes</taxon>
        <taxon>Mycobacteriales</taxon>
        <taxon>Mycobacteriaceae</taxon>
        <taxon>Mycobacterium</taxon>
        <taxon>Mycobacterium tuberculosis complex</taxon>
    </lineage>
</organism>
<gene>
    <name type="ordered locus">MT2135</name>
</gene>
<proteinExistence type="predicted"/>
<reference key="1">
    <citation type="journal article" date="2002" name="J. Bacteriol.">
        <title>Whole-genome comparison of Mycobacterium tuberculosis clinical and laboratory strains.</title>
        <authorList>
            <person name="Fleischmann R.D."/>
            <person name="Alland D."/>
            <person name="Eisen J.A."/>
            <person name="Carpenter L."/>
            <person name="White O."/>
            <person name="Peterson J.D."/>
            <person name="DeBoy R.T."/>
            <person name="Dodson R.J."/>
            <person name="Gwinn M.L."/>
            <person name="Haft D.H."/>
            <person name="Hickey E.K."/>
            <person name="Kolonay J.F."/>
            <person name="Nelson W.C."/>
            <person name="Umayam L.A."/>
            <person name="Ermolaeva M.D."/>
            <person name="Salzberg S.L."/>
            <person name="Delcher A."/>
            <person name="Utterback T.R."/>
            <person name="Weidman J.F."/>
            <person name="Khouri H.M."/>
            <person name="Gill J."/>
            <person name="Mikula A."/>
            <person name="Bishai W."/>
            <person name="Jacobs W.R. Jr."/>
            <person name="Venter J.C."/>
            <person name="Fraser C.M."/>
        </authorList>
    </citation>
    <scope>NUCLEOTIDE SEQUENCE [LARGE SCALE GENOMIC DNA]</scope>
    <source>
        <strain>CDC 1551 / Oshkosh</strain>
    </source>
</reference>
<sequence length="487" mass="51580">MPRARWLQSAALMGALAVVLITAAPVAADAYQVPAPPSPTASCDVISPVAIPCVALGKFADAVAAECRRVGVPDARCVLPLAHRVTQAARDAYLQSWVHRTARFQDALQDPVPLRETQWLGTHNSFNSLSDSFTVSHADSNQQLSLAQQLDIDVRALELDLHYLPRLEGHGAPGVTVCHGLGPKNANLGCTVEPLLATVLPQIANWLNAPGHTEEVILLYLEDQLKNASAYESVVATLDQVLRRADGTSLIYRPNPARRATNGCVPLPLDVSREEIRASGARAVLVGSCAPGWSAAVFDWSGVELESGSNSGYRPYPACDATYGRGVYAWRLVRYYEDSTLATALANPTRPPANPQALTPPKVPAMTDCGVNLFGFDQLLPEDGRIQASLWSWAPDEPRAGAGACALQGADGRWVAASCGDPHPAACRDAAGRWTVTPAPVVFAGAALACTAIGADFTLPRTGNQNARLHAVAGPAGGAWVHYLLPP</sequence>
<accession>P9WLL4</accession>
<accession>L0TBE8</accession>
<accession>Q10683</accession>
<keyword id="KW-1003">Cell membrane</keyword>
<keyword id="KW-0472">Membrane</keyword>
<keyword id="KW-1185">Reference proteome</keyword>
<keyword id="KW-0812">Transmembrane</keyword>
<keyword id="KW-1133">Transmembrane helix</keyword>
<comment type="subcellular location">
    <subcellularLocation>
        <location evidence="2">Cell membrane</location>
        <topology evidence="2">Multi-pass membrane protein</topology>
    </subcellularLocation>
</comment>
<dbReference type="EMBL" id="AE000516">
    <property type="protein sequence ID" value="AAK46415.1"/>
    <property type="molecule type" value="Genomic_DNA"/>
</dbReference>
<dbReference type="PIR" id="F70765">
    <property type="entry name" value="F70765"/>
</dbReference>
<dbReference type="RefSeq" id="WP_003899158.1">
    <property type="nucleotide sequence ID" value="NZ_KK341227.1"/>
</dbReference>
<dbReference type="KEGG" id="mtc:MT2135"/>
<dbReference type="PATRIC" id="fig|83331.31.peg.2303"/>
<dbReference type="HOGENOM" id="CLU_631383_0_0_11"/>
<dbReference type="Proteomes" id="UP000001020">
    <property type="component" value="Chromosome"/>
</dbReference>
<dbReference type="GO" id="GO:0005886">
    <property type="term" value="C:plasma membrane"/>
    <property type="evidence" value="ECO:0007669"/>
    <property type="project" value="UniProtKB-SubCell"/>
</dbReference>
<dbReference type="GO" id="GO:0008081">
    <property type="term" value="F:phosphoric diester hydrolase activity"/>
    <property type="evidence" value="ECO:0007669"/>
    <property type="project" value="InterPro"/>
</dbReference>
<dbReference type="GO" id="GO:0006629">
    <property type="term" value="P:lipid metabolic process"/>
    <property type="evidence" value="ECO:0007669"/>
    <property type="project" value="InterPro"/>
</dbReference>
<dbReference type="CDD" id="cd08590">
    <property type="entry name" value="PI-PLCc_Rv2075c_like"/>
    <property type="match status" value="1"/>
</dbReference>
<dbReference type="Gene3D" id="3.20.20.190">
    <property type="entry name" value="Phosphatidylinositol (PI) phosphodiesterase"/>
    <property type="match status" value="1"/>
</dbReference>
<dbReference type="InterPro" id="IPR016187">
    <property type="entry name" value="CTDL_fold"/>
</dbReference>
<dbReference type="InterPro" id="IPR017946">
    <property type="entry name" value="PLC-like_Pdiesterase_TIM-brl"/>
</dbReference>
<dbReference type="InterPro" id="IPR051008">
    <property type="entry name" value="Telomere_Capping_Maintenance"/>
</dbReference>
<dbReference type="PANTHER" id="PTHR35518:SF2">
    <property type="entry name" value="MAINTENANCE OF TELOMERE CAPPING PROTEIN 6"/>
    <property type="match status" value="1"/>
</dbReference>
<dbReference type="PANTHER" id="PTHR35518">
    <property type="entry name" value="MAINTENANCE OF TELOMOERE CAPPING"/>
    <property type="match status" value="1"/>
</dbReference>
<dbReference type="SUPFAM" id="SSF56436">
    <property type="entry name" value="C-type lectin-like"/>
    <property type="match status" value="1"/>
</dbReference>
<dbReference type="SUPFAM" id="SSF51695">
    <property type="entry name" value="PLC-like phosphodiesterases"/>
    <property type="match status" value="1"/>
</dbReference>
<protein>
    <recommendedName>
        <fullName>Uncharacterized protein MT2135</fullName>
    </recommendedName>
</protein>
<name>Y2075_MYCTO</name>
<evidence type="ECO:0000255" key="1"/>
<evidence type="ECO:0000305" key="2"/>